<comment type="function">
    <text evidence="1 5 7 8 9 10 11">Acts as an adapter protein linking the dynein motor complex to various cargos and converts dynein from a non-processive to a highly processive motor in the presence of dynactin. Facilitates the interaction between dynein and dynactin and activates dynein processivity (the ability to move along a microtubule for a long distance without falling off the track). Predominantly recruits 2 dyneins, which increases both the force and speed of the microtubule motor (PubMed:25035494, PubMed:33734450). Component of the FTS/Hook/FHIP complex (FHF complex). The FHF complex may function to promote vesicle trafficking and/or fusion via the homotypic vesicular protein sorting complex (the HOPS complex). May regulate clearance of endocytosed receptors such as MSR1. Participates in defining the architecture and localization of the Golgi complex. FHF complex promotes the distribution of AP-4 complex to the perinuclear area of the cell (PubMed:32073997).</text>
</comment>
<comment type="function">
    <text evidence="12">(Microbial infection) May serve as a target for the spiC protein from Salmonella typhimurium, which inactivates it, leading to a strong alteration in cellular trafficking.</text>
</comment>
<comment type="subunit">
    <text evidence="1 5 7 8 9 10 11">Self-associates. Component of the FTS/Hook/FHIP complex (FHF complex), composed of AKTIP/FTS, FHIP1B, and one or more members of the Hook family of proteins HOOK1, HOOK2, and HOOK3. May interact directly with AKTIP/FTS, HOOK1 and HOOK2 (PubMed:32073997). Associates with several subunits of the homotypic vesicular sorting complex (the HOPS complex) including VPS16 and VPS41; these interactions may be indirect (PubMed:18799622). Interacts with MSR1, and this association is stimulated by ligand binding to MSR1 (PubMed:17237231). Interacts with microtubules (PubMed:11238449). Part of a tripartite complex with dynein and dynactin, acts an adapter linking the dynein motor complex and dynactin (PubMed:33734450). Interacts with dynein intermediate chain and dynactin (DCTN1) (PubMed:25035494). Interacts with CCDC181 (By similarity). Interacts with LRGUK (By similarity).</text>
</comment>
<comment type="subunit">
    <text evidence="12">(Microbial infection) Interacts with Salmonella typhimurium spiC.</text>
</comment>
<comment type="interaction">
    <interactant intactId="EBI-1777078">
        <id>Q86VS8</id>
    </interactant>
    <interactant intactId="EBI-711399">
        <id>Q9H8T0</id>
        <label>AKTIP</label>
    </interactant>
    <organismsDiffer>false</organismsDiffer>
    <experiments>5</experiments>
</comment>
<comment type="interaction">
    <interactant intactId="EBI-1777078">
        <id>Q86VS8</id>
    </interactant>
    <interactant intactId="EBI-12180013">
        <id>O43310-2</id>
        <label>CTIF</label>
    </interactant>
    <organismsDiffer>false</organismsDiffer>
    <experiments>3</experiments>
</comment>
<comment type="interaction">
    <interactant intactId="EBI-1777078">
        <id>Q86VS8</id>
    </interactant>
    <interactant intactId="EBI-746704">
        <id>Q9UJC3</id>
        <label>HOOK1</label>
    </interactant>
    <organismsDiffer>false</organismsDiffer>
    <experiments>8</experiments>
</comment>
<comment type="interaction">
    <interactant intactId="EBI-1777078">
        <id>Q86VS8</id>
    </interactant>
    <interactant intactId="EBI-1223876">
        <id>P13646</id>
        <label>KRT13</label>
    </interactant>
    <organismsDiffer>false</organismsDiffer>
    <experiments>3</experiments>
</comment>
<comment type="interaction">
    <interactant intactId="EBI-1777078">
        <id>Q86VS8</id>
    </interactant>
    <interactant intactId="EBI-3044087">
        <id>Q7Z3Y8</id>
        <label>KRT27</label>
    </interactant>
    <organismsDiffer>false</organismsDiffer>
    <experiments>4</experiments>
</comment>
<comment type="interaction">
    <interactant intactId="EBI-1777078">
        <id>Q86VS8</id>
    </interactant>
    <interactant intactId="EBI-16439278">
        <id>Q6FHY5</id>
        <label>MEOX2</label>
    </interactant>
    <organismsDiffer>false</organismsDiffer>
    <experiments>3</experiments>
</comment>
<comment type="interaction">
    <interactant intactId="EBI-1777078">
        <id>Q86VS8</id>
    </interactant>
    <interactant intactId="EBI-1776976">
        <id>P21757</id>
        <label>MSR1</label>
    </interactant>
    <organismsDiffer>false</organismsDiffer>
    <experiments>4</experiments>
</comment>
<comment type="interaction">
    <interactant intactId="EBI-1777078">
        <id>Q86VS8</id>
    </interactant>
    <interactant intactId="EBI-10171633">
        <id>Q96PV4</id>
        <label>PNMA5</label>
    </interactant>
    <organismsDiffer>false</organismsDiffer>
    <experiments>3</experiments>
</comment>
<comment type="subcellular location">
    <subcellularLocation>
        <location evidence="5">Cytoplasm</location>
        <location evidence="5">Cytoskeleton</location>
    </subcellularLocation>
    <subcellularLocation>
        <location evidence="5">Golgi apparatus</location>
    </subcellularLocation>
    <text evidence="1 5">Enriched at the cis-face of the Golgi complex. Localizes to microtubule asters in prophase (PubMed:11238449). Localizes to the manchette in elongating spermatids (By similarity).</text>
</comment>
<comment type="similarity">
    <text evidence="12">Belongs to the hook family.</text>
</comment>
<comment type="sequence caution" evidence="12">
    <conflict type="miscellaneous discrepancy">
        <sequence resource="EMBL-CDS" id="AAH48304"/>
    </conflict>
    <text>Contaminating sequence. Potential poly-A sequence.</text>
</comment>
<organism>
    <name type="scientific">Homo sapiens</name>
    <name type="common">Human</name>
    <dbReference type="NCBI Taxonomy" id="9606"/>
    <lineage>
        <taxon>Eukaryota</taxon>
        <taxon>Metazoa</taxon>
        <taxon>Chordata</taxon>
        <taxon>Craniata</taxon>
        <taxon>Vertebrata</taxon>
        <taxon>Euteleostomi</taxon>
        <taxon>Mammalia</taxon>
        <taxon>Eutheria</taxon>
        <taxon>Euarchontoglires</taxon>
        <taxon>Primates</taxon>
        <taxon>Haplorrhini</taxon>
        <taxon>Catarrhini</taxon>
        <taxon>Hominidae</taxon>
        <taxon>Homo</taxon>
    </lineage>
</organism>
<gene>
    <name evidence="13" type="primary">HOOK3</name>
</gene>
<evidence type="ECO:0000250" key="1">
    <source>
        <dbReference type="UniProtKB" id="Q8BUK6"/>
    </source>
</evidence>
<evidence type="ECO:0000255" key="2"/>
<evidence type="ECO:0000255" key="3">
    <source>
        <dbReference type="PROSITE-ProRule" id="PRU00044"/>
    </source>
</evidence>
<evidence type="ECO:0000256" key="4">
    <source>
        <dbReference type="SAM" id="MobiDB-lite"/>
    </source>
</evidence>
<evidence type="ECO:0000269" key="5">
    <source>
    </source>
</evidence>
<evidence type="ECO:0000269" key="6">
    <source>
    </source>
</evidence>
<evidence type="ECO:0000269" key="7">
    <source>
    </source>
</evidence>
<evidence type="ECO:0000269" key="8">
    <source>
    </source>
</evidence>
<evidence type="ECO:0000269" key="9">
    <source>
    </source>
</evidence>
<evidence type="ECO:0000269" key="10">
    <source>
    </source>
</evidence>
<evidence type="ECO:0000269" key="11">
    <source>
    </source>
</evidence>
<evidence type="ECO:0000305" key="12"/>
<evidence type="ECO:0000312" key="13">
    <source>
        <dbReference type="HGNC" id="HGNC:23576"/>
    </source>
</evidence>
<evidence type="ECO:0007744" key="14">
    <source>
    </source>
</evidence>
<evidence type="ECO:0007744" key="15">
    <source>
    </source>
</evidence>
<evidence type="ECO:0007744" key="16">
    <source>
    </source>
</evidence>
<evidence type="ECO:0007744" key="17">
    <source>
    </source>
</evidence>
<evidence type="ECO:0007744" key="18">
    <source>
    </source>
</evidence>
<evidence type="ECO:0007744" key="19">
    <source>
    </source>
</evidence>
<evidence type="ECO:0007744" key="20">
    <source>
    </source>
</evidence>
<evidence type="ECO:0007829" key="21">
    <source>
        <dbReference type="PDB" id="6B9H"/>
    </source>
</evidence>
<evidence type="ECO:0007829" key="22">
    <source>
        <dbReference type="PDB" id="8QAT"/>
    </source>
</evidence>
<proteinExistence type="evidence at protein level"/>
<feature type="chain" id="PRO_0000219197" description="Protein Hook homolog 3">
    <location>
        <begin position="1"/>
        <end position="718"/>
    </location>
</feature>
<feature type="domain" description="Calponin-homology (CH)" evidence="3">
    <location>
        <begin position="10"/>
        <end position="126"/>
    </location>
</feature>
<feature type="region of interest" description="Sufficient for interaction with microtubules">
    <location>
        <begin position="1"/>
        <end position="164"/>
    </location>
</feature>
<feature type="region of interest" description="Required for association with Golgi">
    <location>
        <begin position="553"/>
        <end position="718"/>
    </location>
</feature>
<feature type="region of interest" description="Required for interaction with MSR1" evidence="7">
    <location>
        <begin position="556"/>
        <end position="718"/>
    </location>
</feature>
<feature type="region of interest" description="Disordered" evidence="4">
    <location>
        <begin position="682"/>
        <end position="718"/>
    </location>
</feature>
<feature type="coiled-coil region" evidence="2">
    <location>
        <begin position="167"/>
        <end position="433"/>
    </location>
</feature>
<feature type="coiled-coil region" evidence="2">
    <location>
        <begin position="462"/>
        <end position="667"/>
    </location>
</feature>
<feature type="compositionally biased region" description="Low complexity" evidence="4">
    <location>
        <begin position="696"/>
        <end position="707"/>
    </location>
</feature>
<feature type="modified residue" description="N-acetylmethionine" evidence="17 18">
    <location>
        <position position="1"/>
    </location>
</feature>
<feature type="modified residue" description="Phosphoserine" evidence="19">
    <location>
        <position position="3"/>
    </location>
</feature>
<feature type="modified residue" description="Phosphoserine" evidence="19">
    <location>
        <position position="6"/>
    </location>
</feature>
<feature type="modified residue" description="Phosphoserine" evidence="14 15 16 19 20">
    <location>
        <position position="238"/>
    </location>
</feature>
<feature type="modified residue" description="Phosphoserine" evidence="19">
    <location>
        <position position="693"/>
    </location>
</feature>
<feature type="modified residue" description="Phosphoserine" evidence="19">
    <location>
        <position position="707"/>
    </location>
</feature>
<feature type="sequence variant" id="VAR_035710" description="In a breast cancer sample; somatic mutation." evidence="6">
    <original>Q</original>
    <variation>R</variation>
    <location>
        <position position="221"/>
    </location>
</feature>
<feature type="sequence variant" id="VAR_049363" description="In dbSNP:rs34131505.">
    <original>Y</original>
    <variation>S</variation>
    <location>
        <position position="670"/>
    </location>
</feature>
<feature type="sequence conflict" description="In Ref. 4; BAC03473." evidence="12" ref="4">
    <original>M</original>
    <variation>V</variation>
    <location>
        <position position="348"/>
    </location>
</feature>
<feature type="helix" evidence="21">
    <location>
        <begin position="12"/>
        <end position="21"/>
    </location>
</feature>
<feature type="strand" evidence="21">
    <location>
        <begin position="30"/>
        <end position="32"/>
    </location>
</feature>
<feature type="helix" evidence="21">
    <location>
        <begin position="33"/>
        <end position="35"/>
    </location>
</feature>
<feature type="helix" evidence="21">
    <location>
        <begin position="39"/>
        <end position="48"/>
    </location>
</feature>
<feature type="turn" evidence="21">
    <location>
        <begin position="50"/>
        <end position="52"/>
    </location>
</feature>
<feature type="helix" evidence="21">
    <location>
        <begin position="55"/>
        <end position="58"/>
    </location>
</feature>
<feature type="helix" evidence="21">
    <location>
        <begin position="69"/>
        <end position="89"/>
    </location>
</feature>
<feature type="helix" evidence="21">
    <location>
        <begin position="103"/>
        <end position="109"/>
    </location>
</feature>
<feature type="helix" evidence="21">
    <location>
        <begin position="112"/>
        <end position="126"/>
    </location>
</feature>
<feature type="helix" evidence="21">
    <location>
        <begin position="132"/>
        <end position="139"/>
    </location>
</feature>
<feature type="helix" evidence="21">
    <location>
        <begin position="144"/>
        <end position="158"/>
    </location>
</feature>
<feature type="helix" evidence="22">
    <location>
        <begin position="628"/>
        <end position="686"/>
    </location>
</feature>
<feature type="helix" evidence="22">
    <location>
        <begin position="694"/>
        <end position="701"/>
    </location>
</feature>
<keyword id="KW-0002">3D-structure</keyword>
<keyword id="KW-0007">Acetylation</keyword>
<keyword id="KW-0175">Coiled coil</keyword>
<keyword id="KW-0963">Cytoplasm</keyword>
<keyword id="KW-0206">Cytoskeleton</keyword>
<keyword id="KW-0333">Golgi apparatus</keyword>
<keyword id="KW-0493">Microtubule</keyword>
<keyword id="KW-0597">Phosphoprotein</keyword>
<keyword id="KW-0653">Protein transport</keyword>
<keyword id="KW-1267">Proteomics identification</keyword>
<keyword id="KW-1185">Reference proteome</keyword>
<keyword id="KW-0813">Transport</keyword>
<sequence>MFSVESLERAELCESLLTWIQTFNVDAPCQTVEDLTNGVVMAQVLQKIDPAYFDENWLNRIKTEVGDNWRLKISNLKKILKGILDYNHEILGQQINDFTLPDVNLIGEHSDAAELGRMLQLILGCAVNCEQKQEYIQAIMMMEESVQHVVMTAIQELMSKESPVSAGNDAYVDLDRQLKKTTEELNEALSAKEEIAQRCHELDMQVAALQEEKSSLLAENQVLMERLNQSDSIEDPNSPAGRRHLQLQTQLEQLQEETFRLEAAKDDYRIRCEELEKEISELRQQNDELTTLADEAQSLKDEIDVLRHSSDKVSKLEGQVESYKKKLEDLGDLRRQVKLLEEKNTMYMQNTVSLEEELRKANAARSQLETYKRQVVELQNRLSEESKKADKLDFEYKRLKEKVDSLQKEKDRLRTERDSLKETIEELRCVQAQEGQLTTQGLMPLGSQESSDSLAAEIVTPEIREKLIRLQHENKMLKLNQEGSDNEKIALLQSLLDDANLRKNELETENRLVNQRLLEVQSQVEELQKSLQDQGSKAEDSVLLKKKLEEHLEKLHEANNELQKKRAIIEDLEPRFNNSSLKIEELQEALRKKEEEMKQMEERYKKYLEKAKSVIRTLDPKQNQGAAPEIQALKNQLQERDRLFHSLEKEYEKTKSQREMEEKYIVSAWYNMGMTLHKKAAEDRLASTGSGQSFLARQRQATSSRRSYPGHVQPATAR</sequence>
<protein>
    <recommendedName>
        <fullName>Protein Hook homolog 3</fullName>
        <shortName>h-hook3</shortName>
        <shortName>hHK3</shortName>
    </recommendedName>
</protein>
<dbReference type="EMBL" id="AF241830">
    <property type="protein sequence ID" value="AAK29204.1"/>
    <property type="molecule type" value="mRNA"/>
</dbReference>
<dbReference type="EMBL" id="CH471080">
    <property type="protein sequence ID" value="EAW63197.1"/>
    <property type="molecule type" value="Genomic_DNA"/>
</dbReference>
<dbReference type="EMBL" id="CH471080">
    <property type="protein sequence ID" value="EAW63198.1"/>
    <property type="molecule type" value="Genomic_DNA"/>
</dbReference>
<dbReference type="EMBL" id="BC048304">
    <property type="protein sequence ID" value="AAH48304.1"/>
    <property type="status" value="ALT_SEQ"/>
    <property type="molecule type" value="mRNA"/>
</dbReference>
<dbReference type="EMBL" id="BC056146">
    <property type="protein sequence ID" value="AAH56146.1"/>
    <property type="molecule type" value="mRNA"/>
</dbReference>
<dbReference type="EMBL" id="AK090540">
    <property type="protein sequence ID" value="BAC03473.1"/>
    <property type="molecule type" value="mRNA"/>
</dbReference>
<dbReference type="CCDS" id="CCDS6139.1"/>
<dbReference type="RefSeq" id="NP_115786.1">
    <property type="nucleotide sequence ID" value="NM_032410.4"/>
</dbReference>
<dbReference type="PDB" id="5J8E">
    <property type="method" value="X-ray"/>
    <property type="resolution" value="1.70 A"/>
    <property type="chains" value="A/B=1-160"/>
</dbReference>
<dbReference type="PDB" id="6B9H">
    <property type="method" value="X-ray"/>
    <property type="resolution" value="1.50 A"/>
    <property type="chains" value="A=1-160"/>
</dbReference>
<dbReference type="PDB" id="8QAT">
    <property type="method" value="EM"/>
    <property type="resolution" value="3.20 A"/>
    <property type="chains" value="A/B=571-718"/>
</dbReference>
<dbReference type="PDB" id="9KNS">
    <property type="method" value="X-ray"/>
    <property type="resolution" value="2.70 A"/>
    <property type="chains" value="A/B=553-624"/>
</dbReference>
<dbReference type="PDB" id="9KO8">
    <property type="method" value="X-ray"/>
    <property type="resolution" value="3.00 A"/>
    <property type="chains" value="C/D=553-624"/>
</dbReference>
<dbReference type="PDBsum" id="5J8E"/>
<dbReference type="PDBsum" id="6B9H"/>
<dbReference type="PDBsum" id="8QAT"/>
<dbReference type="PDBsum" id="9KNS"/>
<dbReference type="PDBsum" id="9KO8"/>
<dbReference type="EMDB" id="EMD-18302"/>
<dbReference type="EMDB" id="EMD-18303"/>
<dbReference type="SMR" id="Q86VS8"/>
<dbReference type="BioGRID" id="124068">
    <property type="interactions" value="216"/>
</dbReference>
<dbReference type="ComplexPortal" id="CPX-2353">
    <property type="entry name" value="FTS-Hook-FHIP cargo adaptor complex, FHIP1A-HOOK1/3 variant"/>
</dbReference>
<dbReference type="ComplexPortal" id="CPX-2356">
    <property type="entry name" value="FTS-Hook-FHIP cargo adaptor complex, FHIP1B-HOOK1/3 variant"/>
</dbReference>
<dbReference type="ComplexPortal" id="CPX-2359">
    <property type="entry name" value="FTS-Hook-FHIP cargo adaptor complex, FHIP2B-HOOK1/2/3 variant"/>
</dbReference>
<dbReference type="CORUM" id="Q86VS8"/>
<dbReference type="FunCoup" id="Q86VS8">
    <property type="interactions" value="1778"/>
</dbReference>
<dbReference type="IntAct" id="Q86VS8">
    <property type="interactions" value="76"/>
</dbReference>
<dbReference type="STRING" id="9606.ENSP00000305699"/>
<dbReference type="GlyGen" id="Q86VS8">
    <property type="glycosylation" value="1 site, 1 O-linked glycan (1 site)"/>
</dbReference>
<dbReference type="iPTMnet" id="Q86VS8"/>
<dbReference type="MetOSite" id="Q86VS8"/>
<dbReference type="PhosphoSitePlus" id="Q86VS8"/>
<dbReference type="BioMuta" id="HOOK3"/>
<dbReference type="DMDM" id="41688581"/>
<dbReference type="jPOST" id="Q86VS8"/>
<dbReference type="MassIVE" id="Q86VS8"/>
<dbReference type="PaxDb" id="9606-ENSP00000305699"/>
<dbReference type="PeptideAtlas" id="Q86VS8"/>
<dbReference type="ProteomicsDB" id="70068"/>
<dbReference type="Pumba" id="Q86VS8"/>
<dbReference type="Antibodypedia" id="11516">
    <property type="antibodies" value="101 antibodies from 27 providers"/>
</dbReference>
<dbReference type="DNASU" id="84376"/>
<dbReference type="Ensembl" id="ENST00000307602.9">
    <property type="protein sequence ID" value="ENSP00000305699.3"/>
    <property type="gene ID" value="ENSG00000168172.9"/>
</dbReference>
<dbReference type="GeneID" id="84376"/>
<dbReference type="KEGG" id="hsa:84376"/>
<dbReference type="MANE-Select" id="ENST00000307602.9">
    <property type="protein sequence ID" value="ENSP00000305699.3"/>
    <property type="RefSeq nucleotide sequence ID" value="NM_032410.4"/>
    <property type="RefSeq protein sequence ID" value="NP_115786.1"/>
</dbReference>
<dbReference type="UCSC" id="uc003xpr.4">
    <property type="organism name" value="human"/>
</dbReference>
<dbReference type="AGR" id="HGNC:23576"/>
<dbReference type="CTD" id="84376"/>
<dbReference type="DisGeNET" id="84376"/>
<dbReference type="GeneCards" id="HOOK3"/>
<dbReference type="HGNC" id="HGNC:23576">
    <property type="gene designation" value="HOOK3"/>
</dbReference>
<dbReference type="HPA" id="ENSG00000168172">
    <property type="expression patterns" value="Low tissue specificity"/>
</dbReference>
<dbReference type="MIM" id="607825">
    <property type="type" value="gene"/>
</dbReference>
<dbReference type="neXtProt" id="NX_Q86VS8"/>
<dbReference type="OpenTargets" id="ENSG00000168172"/>
<dbReference type="PharmGKB" id="PA134961305"/>
<dbReference type="VEuPathDB" id="HostDB:ENSG00000168172"/>
<dbReference type="eggNOG" id="ENOG502QQM8">
    <property type="taxonomic scope" value="Eukaryota"/>
</dbReference>
<dbReference type="GeneTree" id="ENSGT00940000158075"/>
<dbReference type="HOGENOM" id="CLU_011214_1_0_1"/>
<dbReference type="InParanoid" id="Q86VS8"/>
<dbReference type="OMA" id="DAKYRKC"/>
<dbReference type="OrthoDB" id="49395at2759"/>
<dbReference type="PAN-GO" id="Q86VS8">
    <property type="GO annotations" value="6 GO annotations based on evolutionary models"/>
</dbReference>
<dbReference type="PhylomeDB" id="Q86VS8"/>
<dbReference type="TreeFam" id="TF320231"/>
<dbReference type="PathwayCommons" id="Q86VS8"/>
<dbReference type="SignaLink" id="Q86VS8"/>
<dbReference type="SIGNOR" id="Q86VS8"/>
<dbReference type="BioGRID-ORCS" id="84376">
    <property type="hits" value="13 hits in 1156 CRISPR screens"/>
</dbReference>
<dbReference type="CD-CODE" id="FB4E32DD">
    <property type="entry name" value="Presynaptic clusters and postsynaptic densities"/>
</dbReference>
<dbReference type="ChiTaRS" id="HOOK3">
    <property type="organism name" value="human"/>
</dbReference>
<dbReference type="GeneWiki" id="HOOK3"/>
<dbReference type="GenomeRNAi" id="84376"/>
<dbReference type="Pharos" id="Q86VS8">
    <property type="development level" value="Tbio"/>
</dbReference>
<dbReference type="PRO" id="PR:Q86VS8"/>
<dbReference type="Proteomes" id="UP000005640">
    <property type="component" value="Chromosome 8"/>
</dbReference>
<dbReference type="RNAct" id="Q86VS8">
    <property type="molecule type" value="protein"/>
</dbReference>
<dbReference type="Bgee" id="ENSG00000168172">
    <property type="expression patterns" value="Expressed in calcaneal tendon and 192 other cell types or tissues"/>
</dbReference>
<dbReference type="ExpressionAtlas" id="Q86VS8">
    <property type="expression patterns" value="baseline and differential"/>
</dbReference>
<dbReference type="GO" id="GO:0034451">
    <property type="term" value="C:centriolar satellite"/>
    <property type="evidence" value="ECO:0007669"/>
    <property type="project" value="Ensembl"/>
</dbReference>
<dbReference type="GO" id="GO:0005813">
    <property type="term" value="C:centrosome"/>
    <property type="evidence" value="ECO:0000250"/>
    <property type="project" value="BHF-UCL"/>
</dbReference>
<dbReference type="GO" id="GO:0005801">
    <property type="term" value="C:cis-Golgi network"/>
    <property type="evidence" value="ECO:0000314"/>
    <property type="project" value="UniProtKB"/>
</dbReference>
<dbReference type="GO" id="GO:0005737">
    <property type="term" value="C:cytoplasm"/>
    <property type="evidence" value="ECO:0000318"/>
    <property type="project" value="GO_Central"/>
</dbReference>
<dbReference type="GO" id="GO:0070695">
    <property type="term" value="C:FHF complex"/>
    <property type="evidence" value="ECO:0000314"/>
    <property type="project" value="UniProtKB"/>
</dbReference>
<dbReference type="GO" id="GO:0005874">
    <property type="term" value="C:microtubule"/>
    <property type="evidence" value="ECO:0007669"/>
    <property type="project" value="UniProtKB-KW"/>
</dbReference>
<dbReference type="GO" id="GO:0000242">
    <property type="term" value="C:pericentriolar material"/>
    <property type="evidence" value="ECO:0000250"/>
    <property type="project" value="BHF-UCL"/>
</dbReference>
<dbReference type="GO" id="GO:0034452">
    <property type="term" value="F:dynactin binding"/>
    <property type="evidence" value="ECO:0000314"/>
    <property type="project" value="UniProtKB"/>
</dbReference>
<dbReference type="GO" id="GO:0045505">
    <property type="term" value="F:dynein intermediate chain binding"/>
    <property type="evidence" value="ECO:0000314"/>
    <property type="project" value="UniProtKB"/>
</dbReference>
<dbReference type="GO" id="GO:0045503">
    <property type="term" value="F:dynein light chain binding"/>
    <property type="evidence" value="ECO:0000353"/>
    <property type="project" value="UniProtKB"/>
</dbReference>
<dbReference type="GO" id="GO:0051959">
    <property type="term" value="F:dynein light intermediate chain binding"/>
    <property type="evidence" value="ECO:0000318"/>
    <property type="project" value="GO_Central"/>
</dbReference>
<dbReference type="GO" id="GO:0042802">
    <property type="term" value="F:identical protein binding"/>
    <property type="evidence" value="ECO:0000353"/>
    <property type="project" value="UniProtKB"/>
</dbReference>
<dbReference type="GO" id="GO:0008017">
    <property type="term" value="F:microtubule binding"/>
    <property type="evidence" value="ECO:0000314"/>
    <property type="project" value="UniProtKB"/>
</dbReference>
<dbReference type="GO" id="GO:0031122">
    <property type="term" value="P:cytoplasmic microtubule organization"/>
    <property type="evidence" value="ECO:0000315"/>
    <property type="project" value="UniProtKB"/>
</dbReference>
<dbReference type="GO" id="GO:0030705">
    <property type="term" value="P:cytoskeleton-dependent intracellular transport"/>
    <property type="evidence" value="ECO:0000318"/>
    <property type="project" value="GO_Central"/>
</dbReference>
<dbReference type="GO" id="GO:0045022">
    <property type="term" value="P:early endosome to late endosome transport"/>
    <property type="evidence" value="ECO:0000315"/>
    <property type="project" value="UniProtKB"/>
</dbReference>
<dbReference type="GO" id="GO:0007032">
    <property type="term" value="P:endosome organization"/>
    <property type="evidence" value="ECO:0000315"/>
    <property type="project" value="UniProtKB"/>
</dbReference>
<dbReference type="GO" id="GO:0008333">
    <property type="term" value="P:endosome to lysosome transport"/>
    <property type="evidence" value="ECO:0000315"/>
    <property type="project" value="UniProtKB"/>
</dbReference>
<dbReference type="GO" id="GO:0051645">
    <property type="term" value="P:Golgi localization"/>
    <property type="evidence" value="ECO:0000315"/>
    <property type="project" value="UniProtKB"/>
</dbReference>
<dbReference type="GO" id="GO:0022027">
    <property type="term" value="P:interkinetic nuclear migration"/>
    <property type="evidence" value="ECO:0000250"/>
    <property type="project" value="BHF-UCL"/>
</dbReference>
<dbReference type="GO" id="GO:0007040">
    <property type="term" value="P:lysosome organization"/>
    <property type="evidence" value="ECO:0000315"/>
    <property type="project" value="UniProtKB"/>
</dbReference>
<dbReference type="GO" id="GO:0034454">
    <property type="term" value="P:microtubule anchoring at centrosome"/>
    <property type="evidence" value="ECO:0000250"/>
    <property type="project" value="BHF-UCL"/>
</dbReference>
<dbReference type="GO" id="GO:0050768">
    <property type="term" value="P:negative regulation of neurogenesis"/>
    <property type="evidence" value="ECO:0000250"/>
    <property type="project" value="BHF-UCL"/>
</dbReference>
<dbReference type="GO" id="GO:0097150">
    <property type="term" value="P:neuronal stem cell population maintenance"/>
    <property type="evidence" value="ECO:0007669"/>
    <property type="project" value="Ensembl"/>
</dbReference>
<dbReference type="GO" id="GO:0071539">
    <property type="term" value="P:protein localization to centrosome"/>
    <property type="evidence" value="ECO:0000250"/>
    <property type="project" value="BHF-UCL"/>
</dbReference>
<dbReference type="GO" id="GO:1905719">
    <property type="term" value="P:protein localization to perinuclear region of cytoplasm"/>
    <property type="evidence" value="ECO:0000315"/>
    <property type="project" value="UniProtKB"/>
</dbReference>
<dbReference type="GO" id="GO:0015031">
    <property type="term" value="P:protein transport"/>
    <property type="evidence" value="ECO:0007669"/>
    <property type="project" value="UniProtKB-KW"/>
</dbReference>
<dbReference type="CDD" id="cd22226">
    <property type="entry name" value="HkD_Hook3"/>
    <property type="match status" value="1"/>
</dbReference>
<dbReference type="FunFam" id="1.10.418.10:FF:000215">
    <property type="entry name" value="Protein Hook homolog 3"/>
    <property type="match status" value="1"/>
</dbReference>
<dbReference type="Gene3D" id="1.10.418.10">
    <property type="entry name" value="Calponin-like domain"/>
    <property type="match status" value="1"/>
</dbReference>
<dbReference type="InterPro" id="IPR001715">
    <property type="entry name" value="CH_dom"/>
</dbReference>
<dbReference type="InterPro" id="IPR036872">
    <property type="entry name" value="CH_dom_sf"/>
</dbReference>
<dbReference type="InterPro" id="IPR008636">
    <property type="entry name" value="Hook_C"/>
</dbReference>
<dbReference type="InterPro" id="IPR043936">
    <property type="entry name" value="HOOK_N"/>
</dbReference>
<dbReference type="PANTHER" id="PTHR18947">
    <property type="entry name" value="HOOK PROTEINS"/>
    <property type="match status" value="1"/>
</dbReference>
<dbReference type="PANTHER" id="PTHR18947:SF38">
    <property type="entry name" value="PROTEIN HOOK HOMOLOG 3"/>
    <property type="match status" value="1"/>
</dbReference>
<dbReference type="Pfam" id="PF05622">
    <property type="entry name" value="HOOK"/>
    <property type="match status" value="1"/>
</dbReference>
<dbReference type="Pfam" id="PF19047">
    <property type="entry name" value="HOOK_N"/>
    <property type="match status" value="1"/>
</dbReference>
<dbReference type="SUPFAM" id="SSF116907">
    <property type="entry name" value="Hook domain"/>
    <property type="match status" value="1"/>
</dbReference>
<dbReference type="PROSITE" id="PS50021">
    <property type="entry name" value="CH"/>
    <property type="match status" value="1"/>
</dbReference>
<reference key="1">
    <citation type="journal article" date="2001" name="J. Cell Biol.">
        <title>The Golgi-associated hook3 protein is a member of a novel family of microtubule-binding proteins.</title>
        <authorList>
            <person name="Walenta J.H."/>
            <person name="Didier A.J."/>
            <person name="Liu X."/>
            <person name="Kraemer H."/>
        </authorList>
    </citation>
    <scope>NUCLEOTIDE SEQUENCE [MRNA]</scope>
    <scope>FUNCTION</scope>
    <scope>INTERACTION WITH MICROTUBULES</scope>
    <scope>SUBCELLULAR LOCATION</scope>
</reference>
<reference key="2">
    <citation type="submission" date="2005-09" db="EMBL/GenBank/DDBJ databases">
        <authorList>
            <person name="Mural R.J."/>
            <person name="Istrail S."/>
            <person name="Sutton G.G."/>
            <person name="Florea L."/>
            <person name="Halpern A.L."/>
            <person name="Mobarry C.M."/>
            <person name="Lippert R."/>
            <person name="Walenz B."/>
            <person name="Shatkay H."/>
            <person name="Dew I."/>
            <person name="Miller J.R."/>
            <person name="Flanigan M.J."/>
            <person name="Edwards N.J."/>
            <person name="Bolanos R."/>
            <person name="Fasulo D."/>
            <person name="Halldorsson B.V."/>
            <person name="Hannenhalli S."/>
            <person name="Turner R."/>
            <person name="Yooseph S."/>
            <person name="Lu F."/>
            <person name="Nusskern D.R."/>
            <person name="Shue B.C."/>
            <person name="Zheng X.H."/>
            <person name="Zhong F."/>
            <person name="Delcher A.L."/>
            <person name="Huson D.H."/>
            <person name="Kravitz S.A."/>
            <person name="Mouchard L."/>
            <person name="Reinert K."/>
            <person name="Remington K.A."/>
            <person name="Clark A.G."/>
            <person name="Waterman M.S."/>
            <person name="Eichler E.E."/>
            <person name="Adams M.D."/>
            <person name="Hunkapiller M.W."/>
            <person name="Myers E.W."/>
            <person name="Venter J.C."/>
        </authorList>
    </citation>
    <scope>NUCLEOTIDE SEQUENCE [LARGE SCALE GENOMIC DNA]</scope>
</reference>
<reference key="3">
    <citation type="journal article" date="2004" name="Genome Res.">
        <title>The status, quality, and expansion of the NIH full-length cDNA project: the Mammalian Gene Collection (MGC).</title>
        <authorList>
            <consortium name="The MGC Project Team"/>
        </authorList>
    </citation>
    <scope>NUCLEOTIDE SEQUENCE [LARGE SCALE MRNA]</scope>
    <source>
        <tissue>Cervix</tissue>
        <tissue>Duodenum</tissue>
    </source>
</reference>
<reference key="4">
    <citation type="journal article" date="2004" name="Nat. Genet.">
        <title>Complete sequencing and characterization of 21,243 full-length human cDNAs.</title>
        <authorList>
            <person name="Ota T."/>
            <person name="Suzuki Y."/>
            <person name="Nishikawa T."/>
            <person name="Otsuki T."/>
            <person name="Sugiyama T."/>
            <person name="Irie R."/>
            <person name="Wakamatsu A."/>
            <person name="Hayashi K."/>
            <person name="Sato H."/>
            <person name="Nagai K."/>
            <person name="Kimura K."/>
            <person name="Makita H."/>
            <person name="Sekine M."/>
            <person name="Obayashi M."/>
            <person name="Nishi T."/>
            <person name="Shibahara T."/>
            <person name="Tanaka T."/>
            <person name="Ishii S."/>
            <person name="Yamamoto J."/>
            <person name="Saito K."/>
            <person name="Kawai Y."/>
            <person name="Isono Y."/>
            <person name="Nakamura Y."/>
            <person name="Nagahari K."/>
            <person name="Murakami K."/>
            <person name="Yasuda T."/>
            <person name="Iwayanagi T."/>
            <person name="Wagatsuma M."/>
            <person name="Shiratori A."/>
            <person name="Sudo H."/>
            <person name="Hosoiri T."/>
            <person name="Kaku Y."/>
            <person name="Kodaira H."/>
            <person name="Kondo H."/>
            <person name="Sugawara M."/>
            <person name="Takahashi M."/>
            <person name="Kanda K."/>
            <person name="Yokoi T."/>
            <person name="Furuya T."/>
            <person name="Kikkawa E."/>
            <person name="Omura Y."/>
            <person name="Abe K."/>
            <person name="Kamihara K."/>
            <person name="Katsuta N."/>
            <person name="Sato K."/>
            <person name="Tanikawa M."/>
            <person name="Yamazaki M."/>
            <person name="Ninomiya K."/>
            <person name="Ishibashi T."/>
            <person name="Yamashita H."/>
            <person name="Murakawa K."/>
            <person name="Fujimori K."/>
            <person name="Tanai H."/>
            <person name="Kimata M."/>
            <person name="Watanabe M."/>
            <person name="Hiraoka S."/>
            <person name="Chiba Y."/>
            <person name="Ishida S."/>
            <person name="Ono Y."/>
            <person name="Takiguchi S."/>
            <person name="Watanabe S."/>
            <person name="Yosida M."/>
            <person name="Hotuta T."/>
            <person name="Kusano J."/>
            <person name="Kanehori K."/>
            <person name="Takahashi-Fujii A."/>
            <person name="Hara H."/>
            <person name="Tanase T.-O."/>
            <person name="Nomura Y."/>
            <person name="Togiya S."/>
            <person name="Komai F."/>
            <person name="Hara R."/>
            <person name="Takeuchi K."/>
            <person name="Arita M."/>
            <person name="Imose N."/>
            <person name="Musashino K."/>
            <person name="Yuuki H."/>
            <person name="Oshima A."/>
            <person name="Sasaki N."/>
            <person name="Aotsuka S."/>
            <person name="Yoshikawa Y."/>
            <person name="Matsunawa H."/>
            <person name="Ichihara T."/>
            <person name="Shiohata N."/>
            <person name="Sano S."/>
            <person name="Moriya S."/>
            <person name="Momiyama H."/>
            <person name="Satoh N."/>
            <person name="Takami S."/>
            <person name="Terashima Y."/>
            <person name="Suzuki O."/>
            <person name="Nakagawa S."/>
            <person name="Senoh A."/>
            <person name="Mizoguchi H."/>
            <person name="Goto Y."/>
            <person name="Shimizu F."/>
            <person name="Wakebe H."/>
            <person name="Hishigaki H."/>
            <person name="Watanabe T."/>
            <person name="Sugiyama A."/>
            <person name="Takemoto M."/>
            <person name="Kawakami B."/>
            <person name="Yamazaki M."/>
            <person name="Watanabe K."/>
            <person name="Kumagai A."/>
            <person name="Itakura S."/>
            <person name="Fukuzumi Y."/>
            <person name="Fujimori Y."/>
            <person name="Komiyama M."/>
            <person name="Tashiro H."/>
            <person name="Tanigami A."/>
            <person name="Fujiwara T."/>
            <person name="Ono T."/>
            <person name="Yamada K."/>
            <person name="Fujii Y."/>
            <person name="Ozaki K."/>
            <person name="Hirao M."/>
            <person name="Ohmori Y."/>
            <person name="Kawabata A."/>
            <person name="Hikiji T."/>
            <person name="Kobatake N."/>
            <person name="Inagaki H."/>
            <person name="Ikema Y."/>
            <person name="Okamoto S."/>
            <person name="Okitani R."/>
            <person name="Kawakami T."/>
            <person name="Noguchi S."/>
            <person name="Itoh T."/>
            <person name="Shigeta K."/>
            <person name="Senba T."/>
            <person name="Matsumura K."/>
            <person name="Nakajima Y."/>
            <person name="Mizuno T."/>
            <person name="Morinaga M."/>
            <person name="Sasaki M."/>
            <person name="Togashi T."/>
            <person name="Oyama M."/>
            <person name="Hata H."/>
            <person name="Watanabe M."/>
            <person name="Komatsu T."/>
            <person name="Mizushima-Sugano J."/>
            <person name="Satoh T."/>
            <person name="Shirai Y."/>
            <person name="Takahashi Y."/>
            <person name="Nakagawa K."/>
            <person name="Okumura K."/>
            <person name="Nagase T."/>
            <person name="Nomura N."/>
            <person name="Kikuchi H."/>
            <person name="Masuho Y."/>
            <person name="Yamashita R."/>
            <person name="Nakai K."/>
            <person name="Yada T."/>
            <person name="Nakamura Y."/>
            <person name="Ohara O."/>
            <person name="Isogai T."/>
            <person name="Sugano S."/>
        </authorList>
    </citation>
    <scope>NUCLEOTIDE SEQUENCE [LARGE SCALE MRNA] OF 346-718</scope>
    <source>
        <tissue>Astrocyte</tissue>
    </source>
</reference>
<reference key="5">
    <citation type="journal article" date="2006" name="Nat. Biotechnol.">
        <title>A probability-based approach for high-throughput protein phosphorylation analysis and site localization.</title>
        <authorList>
            <person name="Beausoleil S.A."/>
            <person name="Villen J."/>
            <person name="Gerber S.A."/>
            <person name="Rush J."/>
            <person name="Gygi S.P."/>
        </authorList>
    </citation>
    <scope>PHOSPHORYLATION [LARGE SCALE ANALYSIS] AT SER-238</scope>
    <scope>IDENTIFICATION BY MASS SPECTROMETRY [LARGE SCALE ANALYSIS]</scope>
    <source>
        <tissue>Cervix carcinoma</tissue>
    </source>
</reference>
<reference key="6">
    <citation type="journal article" date="2007" name="J. Biol. Chem.">
        <title>The microtubule-binding protein Hook3 interacts with a cytoplasmic domain of scavenger receptor A.</title>
        <authorList>
            <person name="Sano H."/>
            <person name="Ishino M."/>
            <person name="Kraemer H."/>
            <person name="Shimizu T."/>
            <person name="Mitsuzawa H."/>
            <person name="Nishitani C."/>
            <person name="Kuroki Y."/>
        </authorList>
    </citation>
    <scope>FUNCTION</scope>
    <scope>INTERACTION WITH MSR1</scope>
</reference>
<reference key="7">
    <citation type="journal article" date="2008" name="Mol. Biol. Cell">
        <title>An FTS/Hook/p107(FHIP) complex interacts with and promotes endosomal clustering by the homotypic vacuolar protein sorting complex.</title>
        <authorList>
            <person name="Xu L."/>
            <person name="Sowa M.E."/>
            <person name="Chen J."/>
            <person name="Li X."/>
            <person name="Gygi S.P."/>
            <person name="Harper J.W."/>
        </authorList>
    </citation>
    <scope>IDENTIFICATION BY MASS SPECTROMETRY</scope>
    <scope>IDENTIFICATION IN THE FHF COMPLEX</scope>
    <scope>FUNCTION</scope>
    <scope>SELF-ASSOCIATION</scope>
    <scope>INTERACTION WITH AKTIP; HOOK1; HOOK2; VPS16 AND VPS41</scope>
</reference>
<reference key="8">
    <citation type="journal article" date="2008" name="Proc. Natl. Acad. Sci. U.S.A.">
        <title>A quantitative atlas of mitotic phosphorylation.</title>
        <authorList>
            <person name="Dephoure N."/>
            <person name="Zhou C."/>
            <person name="Villen J."/>
            <person name="Beausoleil S.A."/>
            <person name="Bakalarski C.E."/>
            <person name="Elledge S.J."/>
            <person name="Gygi S.P."/>
        </authorList>
    </citation>
    <scope>PHOSPHORYLATION [LARGE SCALE ANALYSIS] AT SER-238</scope>
    <scope>IDENTIFICATION BY MASS SPECTROMETRY [LARGE SCALE ANALYSIS]</scope>
    <source>
        <tissue>Cervix carcinoma</tissue>
    </source>
</reference>
<reference key="9">
    <citation type="journal article" date="2010" name="Sci. Signal.">
        <title>Quantitative phosphoproteomics reveals widespread full phosphorylation site occupancy during mitosis.</title>
        <authorList>
            <person name="Olsen J.V."/>
            <person name="Vermeulen M."/>
            <person name="Santamaria A."/>
            <person name="Kumar C."/>
            <person name="Miller M.L."/>
            <person name="Jensen L.J."/>
            <person name="Gnad F."/>
            <person name="Cox J."/>
            <person name="Jensen T.S."/>
            <person name="Nigg E.A."/>
            <person name="Brunak S."/>
            <person name="Mann M."/>
        </authorList>
    </citation>
    <scope>PHOSPHORYLATION [LARGE SCALE ANALYSIS] AT SER-238</scope>
    <scope>IDENTIFICATION BY MASS SPECTROMETRY [LARGE SCALE ANALYSIS]</scope>
    <source>
        <tissue>Cervix carcinoma</tissue>
    </source>
</reference>
<reference key="10">
    <citation type="journal article" date="2011" name="BMC Syst. Biol.">
        <title>Initial characterization of the human central proteome.</title>
        <authorList>
            <person name="Burkard T.R."/>
            <person name="Planyavsky M."/>
            <person name="Kaupe I."/>
            <person name="Breitwieser F.P."/>
            <person name="Buerckstuemmer T."/>
            <person name="Bennett K.L."/>
            <person name="Superti-Furga G."/>
            <person name="Colinge J."/>
        </authorList>
    </citation>
    <scope>IDENTIFICATION BY MASS SPECTROMETRY [LARGE SCALE ANALYSIS]</scope>
</reference>
<reference key="11">
    <citation type="journal article" date="2012" name="Mol. Cell. Proteomics">
        <title>Comparative large-scale characterisation of plant vs. mammal proteins reveals similar and idiosyncratic N-alpha acetylation features.</title>
        <authorList>
            <person name="Bienvenut W.V."/>
            <person name="Sumpton D."/>
            <person name="Martinez A."/>
            <person name="Lilla S."/>
            <person name="Espagne C."/>
            <person name="Meinnel T."/>
            <person name="Giglione C."/>
        </authorList>
    </citation>
    <scope>ACETYLATION [LARGE SCALE ANALYSIS] AT MET-1</scope>
    <scope>IDENTIFICATION BY MASS SPECTROMETRY [LARGE SCALE ANALYSIS]</scope>
</reference>
<reference key="12">
    <citation type="journal article" date="2012" name="Proc. Natl. Acad. Sci. U.S.A.">
        <title>N-terminal acetylome analyses and functional insights of the N-terminal acetyltransferase NatB.</title>
        <authorList>
            <person name="Van Damme P."/>
            <person name="Lasa M."/>
            <person name="Polevoda B."/>
            <person name="Gazquez C."/>
            <person name="Elosegui-Artola A."/>
            <person name="Kim D.S."/>
            <person name="De Juan-Pardo E."/>
            <person name="Demeyer K."/>
            <person name="Hole K."/>
            <person name="Larrea E."/>
            <person name="Timmerman E."/>
            <person name="Prieto J."/>
            <person name="Arnesen T."/>
            <person name="Sherman F."/>
            <person name="Gevaert K."/>
            <person name="Aldabe R."/>
        </authorList>
    </citation>
    <scope>ACETYLATION [LARGE SCALE ANALYSIS] AT MET-1</scope>
    <scope>IDENTIFICATION BY MASS SPECTROMETRY [LARGE SCALE ANALYSIS]</scope>
</reference>
<reference key="13">
    <citation type="journal article" date="2013" name="J. Proteome Res.">
        <title>Toward a comprehensive characterization of a human cancer cell phosphoproteome.</title>
        <authorList>
            <person name="Zhou H."/>
            <person name="Di Palma S."/>
            <person name="Preisinger C."/>
            <person name="Peng M."/>
            <person name="Polat A.N."/>
            <person name="Heck A.J."/>
            <person name="Mohammed S."/>
        </authorList>
    </citation>
    <scope>PHOSPHORYLATION [LARGE SCALE ANALYSIS] AT SER-3; SER-6; SER-238; SER-693 AND SER-707</scope>
    <scope>IDENTIFICATION BY MASS SPECTROMETRY [LARGE SCALE ANALYSIS]</scope>
    <source>
        <tissue>Cervix carcinoma</tissue>
        <tissue>Erythroleukemia</tissue>
    </source>
</reference>
<reference key="14">
    <citation type="journal article" date="2014" name="J. Proteomics">
        <title>An enzyme assisted RP-RPLC approach for in-depth analysis of human liver phosphoproteome.</title>
        <authorList>
            <person name="Bian Y."/>
            <person name="Song C."/>
            <person name="Cheng K."/>
            <person name="Dong M."/>
            <person name="Wang F."/>
            <person name="Huang J."/>
            <person name="Sun D."/>
            <person name="Wang L."/>
            <person name="Ye M."/>
            <person name="Zou H."/>
        </authorList>
    </citation>
    <scope>PHOSPHORYLATION [LARGE SCALE ANALYSIS] AT SER-238</scope>
    <scope>IDENTIFICATION BY MASS SPECTROMETRY [LARGE SCALE ANALYSIS]</scope>
    <source>
        <tissue>Liver</tissue>
    </source>
</reference>
<reference key="15">
    <citation type="journal article" date="2014" name="Science">
        <title>Activation of cytoplasmic dynein motility by dynactin-cargo adapter complexes.</title>
        <authorList>
            <person name="McKenney R.J."/>
            <person name="Huynh W."/>
            <person name="Tanenbaum M.E."/>
            <person name="Bhabha G."/>
            <person name="Vale R.D."/>
        </authorList>
    </citation>
    <scope>FUNCTION</scope>
    <scope>INTERACTION WITH DYNEIN INTERMEDIATE CHAIN AND DCTN1</scope>
</reference>
<reference key="16">
    <citation type="journal article" date="2020" name="Mol. Biol. Cell">
        <title>The FTS-Hook-FHIP (FHF) complex interacts with AP-4 to mediate perinuclear distribution of AP-4 and its cargo ATG9A.</title>
        <authorList>
            <person name="Mattera R."/>
            <person name="Williamson C.D."/>
            <person name="Ren X."/>
            <person name="Bonifacino J.S."/>
        </authorList>
    </citation>
    <scope>FUNCTION</scope>
    <scope>INTERACTION WITH HOOK1</scope>
</reference>
<reference key="17">
    <citation type="journal article" date="2021" name="EMBO J.">
        <title>Cryo-EM reveals the complex architecture of dynactin's shoulder region and pointed end.</title>
        <authorList>
            <person name="Lau C.K."/>
            <person name="O'Reilly F.J."/>
            <person name="Santhanam B."/>
            <person name="Lacey S.E."/>
            <person name="Rappsilber J."/>
            <person name="Carter A.P."/>
        </authorList>
    </citation>
    <scope>SUBUNIT</scope>
    <scope>FUNCTION</scope>
</reference>
<reference key="18">
    <citation type="journal article" date="2006" name="Science">
        <title>The consensus coding sequences of human breast and colorectal cancers.</title>
        <authorList>
            <person name="Sjoeblom T."/>
            <person name="Jones S."/>
            <person name="Wood L.D."/>
            <person name="Parsons D.W."/>
            <person name="Lin J."/>
            <person name="Barber T.D."/>
            <person name="Mandelker D."/>
            <person name="Leary R.J."/>
            <person name="Ptak J."/>
            <person name="Silliman N."/>
            <person name="Szabo S."/>
            <person name="Buckhaults P."/>
            <person name="Farrell C."/>
            <person name="Meeh P."/>
            <person name="Markowitz S.D."/>
            <person name="Willis J."/>
            <person name="Dawson D."/>
            <person name="Willson J.K.V."/>
            <person name="Gazdar A.F."/>
            <person name="Hartigan J."/>
            <person name="Wu L."/>
            <person name="Liu C."/>
            <person name="Parmigiani G."/>
            <person name="Park B.H."/>
            <person name="Bachman K.E."/>
            <person name="Papadopoulos N."/>
            <person name="Vogelstein B."/>
            <person name="Kinzler K.W."/>
            <person name="Velculescu V.E."/>
        </authorList>
    </citation>
    <scope>VARIANT [LARGE SCALE ANALYSIS] ARG-221</scope>
</reference>
<accession>Q86VS8</accession>
<accession>D3DSY8</accession>
<accession>Q8NBH0</accession>
<accession>Q9BY13</accession>
<name>HOOK3_HUMAN</name>